<accession>A7IEG8</accession>
<sequence>MTASAQKNIRNFSIVAHIDHGKSTLADRLIQITGGLTEREMTDQVLDSMDIERERGITIKAQTVRLSYKAKDGETYILNLIDTPGHVDFAYEVNRSLAAVEGSLLVVDASQGVEAQTLANVYQAIDNNHDIVPVLNKVDLPAAEPEKVKAQIEDVIGLDASDAIGISAKTGLNVDQVLEAIVTRLPPPMGDRAAPLKALLVDSWYDTYLGVVVLVRIIDGVLKKGQRIKMMGSGAVNDVDRVGVFTPKMVAMAELGPGEIGFLTGSIKEVADTRVGDTITEDKRPCADMLPGFKPAQPVVFCGLFPVDAAQFEDLRAAMGKLRLNDASFSYEMETSAALGFGFRCGFLGLLHLEIIQERLEREFNLDLIATAPSVIYEIQMTDGSVIDLHNPADMPDVVKIEEIREPWIRATILTPDEYLGSVLKLCQDRRGTQIELTYVGARAMVTYDLPLNEVVFDFYDRLKSISKGYASFDYQITEYRAGDLVKMSILVNSEPVDALSMLVHRARADARGRVMCEKLKDLIPQHLFNIPIQAAIGAKIIARETIKALRKDVTAKCYGGDISRKRKLLDKQKEGKKKMRQFGKVEIPQEAFIAALKMDE</sequence>
<proteinExistence type="inferred from homology"/>
<name>LEPA_XANP2</name>
<dbReference type="EC" id="3.6.5.n1" evidence="1"/>
<dbReference type="EMBL" id="CP000781">
    <property type="protein sequence ID" value="ABS66411.1"/>
    <property type="molecule type" value="Genomic_DNA"/>
</dbReference>
<dbReference type="SMR" id="A7IEG8"/>
<dbReference type="STRING" id="78245.Xaut_1162"/>
<dbReference type="KEGG" id="xau:Xaut_1162"/>
<dbReference type="eggNOG" id="COG0481">
    <property type="taxonomic scope" value="Bacteria"/>
</dbReference>
<dbReference type="HOGENOM" id="CLU_009995_3_3_5"/>
<dbReference type="OrthoDB" id="9802948at2"/>
<dbReference type="PhylomeDB" id="A7IEG8"/>
<dbReference type="Proteomes" id="UP000002417">
    <property type="component" value="Chromosome"/>
</dbReference>
<dbReference type="GO" id="GO:0005886">
    <property type="term" value="C:plasma membrane"/>
    <property type="evidence" value="ECO:0007669"/>
    <property type="project" value="UniProtKB-SubCell"/>
</dbReference>
<dbReference type="GO" id="GO:0005525">
    <property type="term" value="F:GTP binding"/>
    <property type="evidence" value="ECO:0007669"/>
    <property type="project" value="UniProtKB-UniRule"/>
</dbReference>
<dbReference type="GO" id="GO:0003924">
    <property type="term" value="F:GTPase activity"/>
    <property type="evidence" value="ECO:0007669"/>
    <property type="project" value="UniProtKB-UniRule"/>
</dbReference>
<dbReference type="GO" id="GO:0097216">
    <property type="term" value="F:guanosine tetraphosphate binding"/>
    <property type="evidence" value="ECO:0007669"/>
    <property type="project" value="UniProtKB-ARBA"/>
</dbReference>
<dbReference type="GO" id="GO:0043022">
    <property type="term" value="F:ribosome binding"/>
    <property type="evidence" value="ECO:0007669"/>
    <property type="project" value="UniProtKB-UniRule"/>
</dbReference>
<dbReference type="GO" id="GO:0003746">
    <property type="term" value="F:translation elongation factor activity"/>
    <property type="evidence" value="ECO:0007669"/>
    <property type="project" value="UniProtKB-UniRule"/>
</dbReference>
<dbReference type="GO" id="GO:0045727">
    <property type="term" value="P:positive regulation of translation"/>
    <property type="evidence" value="ECO:0007669"/>
    <property type="project" value="UniProtKB-UniRule"/>
</dbReference>
<dbReference type="CDD" id="cd03699">
    <property type="entry name" value="EF4_II"/>
    <property type="match status" value="1"/>
</dbReference>
<dbReference type="CDD" id="cd16260">
    <property type="entry name" value="EF4_III"/>
    <property type="match status" value="1"/>
</dbReference>
<dbReference type="CDD" id="cd01890">
    <property type="entry name" value="LepA"/>
    <property type="match status" value="1"/>
</dbReference>
<dbReference type="CDD" id="cd03709">
    <property type="entry name" value="lepA_C"/>
    <property type="match status" value="1"/>
</dbReference>
<dbReference type="FunFam" id="3.40.50.300:FF:000078">
    <property type="entry name" value="Elongation factor 4"/>
    <property type="match status" value="1"/>
</dbReference>
<dbReference type="FunFam" id="2.40.30.10:FF:000015">
    <property type="entry name" value="Translation factor GUF1, mitochondrial"/>
    <property type="match status" value="1"/>
</dbReference>
<dbReference type="FunFam" id="3.30.70.240:FF:000007">
    <property type="entry name" value="Translation factor GUF1, mitochondrial"/>
    <property type="match status" value="1"/>
</dbReference>
<dbReference type="FunFam" id="3.30.70.2570:FF:000001">
    <property type="entry name" value="Translation factor GUF1, mitochondrial"/>
    <property type="match status" value="1"/>
</dbReference>
<dbReference type="FunFam" id="3.30.70.870:FF:000004">
    <property type="entry name" value="Translation factor GUF1, mitochondrial"/>
    <property type="match status" value="1"/>
</dbReference>
<dbReference type="Gene3D" id="3.30.70.240">
    <property type="match status" value="1"/>
</dbReference>
<dbReference type="Gene3D" id="3.30.70.2570">
    <property type="entry name" value="Elongation factor 4, C-terminal domain"/>
    <property type="match status" value="1"/>
</dbReference>
<dbReference type="Gene3D" id="3.30.70.870">
    <property type="entry name" value="Elongation Factor G (Translational Gtpase), domain 3"/>
    <property type="match status" value="1"/>
</dbReference>
<dbReference type="Gene3D" id="3.40.50.300">
    <property type="entry name" value="P-loop containing nucleotide triphosphate hydrolases"/>
    <property type="match status" value="1"/>
</dbReference>
<dbReference type="Gene3D" id="2.40.30.10">
    <property type="entry name" value="Translation factors"/>
    <property type="match status" value="1"/>
</dbReference>
<dbReference type="HAMAP" id="MF_00071">
    <property type="entry name" value="LepA"/>
    <property type="match status" value="1"/>
</dbReference>
<dbReference type="InterPro" id="IPR006297">
    <property type="entry name" value="EF-4"/>
</dbReference>
<dbReference type="InterPro" id="IPR035647">
    <property type="entry name" value="EFG_III/V"/>
</dbReference>
<dbReference type="InterPro" id="IPR000640">
    <property type="entry name" value="EFG_V-like"/>
</dbReference>
<dbReference type="InterPro" id="IPR004161">
    <property type="entry name" value="EFTu-like_2"/>
</dbReference>
<dbReference type="InterPro" id="IPR031157">
    <property type="entry name" value="G_TR_CS"/>
</dbReference>
<dbReference type="InterPro" id="IPR038363">
    <property type="entry name" value="LepA_C_sf"/>
</dbReference>
<dbReference type="InterPro" id="IPR013842">
    <property type="entry name" value="LepA_CTD"/>
</dbReference>
<dbReference type="InterPro" id="IPR035654">
    <property type="entry name" value="LepA_IV"/>
</dbReference>
<dbReference type="InterPro" id="IPR027417">
    <property type="entry name" value="P-loop_NTPase"/>
</dbReference>
<dbReference type="InterPro" id="IPR005225">
    <property type="entry name" value="Small_GTP-bd"/>
</dbReference>
<dbReference type="InterPro" id="IPR000795">
    <property type="entry name" value="T_Tr_GTP-bd_dom"/>
</dbReference>
<dbReference type="NCBIfam" id="TIGR01393">
    <property type="entry name" value="lepA"/>
    <property type="match status" value="1"/>
</dbReference>
<dbReference type="NCBIfam" id="TIGR00231">
    <property type="entry name" value="small_GTP"/>
    <property type="match status" value="1"/>
</dbReference>
<dbReference type="PANTHER" id="PTHR43512:SF4">
    <property type="entry name" value="TRANSLATION FACTOR GUF1 HOMOLOG, CHLOROPLASTIC"/>
    <property type="match status" value="1"/>
</dbReference>
<dbReference type="PANTHER" id="PTHR43512">
    <property type="entry name" value="TRANSLATION FACTOR GUF1-RELATED"/>
    <property type="match status" value="1"/>
</dbReference>
<dbReference type="Pfam" id="PF00679">
    <property type="entry name" value="EFG_C"/>
    <property type="match status" value="1"/>
</dbReference>
<dbReference type="Pfam" id="PF00009">
    <property type="entry name" value="GTP_EFTU"/>
    <property type="match status" value="1"/>
</dbReference>
<dbReference type="Pfam" id="PF03144">
    <property type="entry name" value="GTP_EFTU_D2"/>
    <property type="match status" value="1"/>
</dbReference>
<dbReference type="Pfam" id="PF06421">
    <property type="entry name" value="LepA_C"/>
    <property type="match status" value="1"/>
</dbReference>
<dbReference type="PRINTS" id="PR00315">
    <property type="entry name" value="ELONGATNFCT"/>
</dbReference>
<dbReference type="SUPFAM" id="SSF54980">
    <property type="entry name" value="EF-G C-terminal domain-like"/>
    <property type="match status" value="2"/>
</dbReference>
<dbReference type="SUPFAM" id="SSF52540">
    <property type="entry name" value="P-loop containing nucleoside triphosphate hydrolases"/>
    <property type="match status" value="1"/>
</dbReference>
<dbReference type="PROSITE" id="PS00301">
    <property type="entry name" value="G_TR_1"/>
    <property type="match status" value="1"/>
</dbReference>
<dbReference type="PROSITE" id="PS51722">
    <property type="entry name" value="G_TR_2"/>
    <property type="match status" value="1"/>
</dbReference>
<protein>
    <recommendedName>
        <fullName evidence="1">Elongation factor 4</fullName>
        <shortName evidence="1">EF-4</shortName>
        <ecNumber evidence="1">3.6.5.n1</ecNumber>
    </recommendedName>
    <alternativeName>
        <fullName evidence="1">Ribosomal back-translocase LepA</fullName>
    </alternativeName>
</protein>
<organism>
    <name type="scientific">Xanthobacter autotrophicus (strain ATCC BAA-1158 / Py2)</name>
    <dbReference type="NCBI Taxonomy" id="78245"/>
    <lineage>
        <taxon>Bacteria</taxon>
        <taxon>Pseudomonadati</taxon>
        <taxon>Pseudomonadota</taxon>
        <taxon>Alphaproteobacteria</taxon>
        <taxon>Hyphomicrobiales</taxon>
        <taxon>Xanthobacteraceae</taxon>
        <taxon>Xanthobacter</taxon>
    </lineage>
</organism>
<gene>
    <name evidence="1" type="primary">lepA</name>
    <name type="ordered locus">Xaut_1162</name>
</gene>
<reference key="1">
    <citation type="submission" date="2007-07" db="EMBL/GenBank/DDBJ databases">
        <title>Complete sequence of chromosome of Xanthobacter autotrophicus Py2.</title>
        <authorList>
            <consortium name="US DOE Joint Genome Institute"/>
            <person name="Copeland A."/>
            <person name="Lucas S."/>
            <person name="Lapidus A."/>
            <person name="Barry K."/>
            <person name="Glavina del Rio T."/>
            <person name="Hammon N."/>
            <person name="Israni S."/>
            <person name="Dalin E."/>
            <person name="Tice H."/>
            <person name="Pitluck S."/>
            <person name="Sims D."/>
            <person name="Brettin T."/>
            <person name="Bruce D."/>
            <person name="Detter J.C."/>
            <person name="Han C."/>
            <person name="Tapia R."/>
            <person name="Brainard J."/>
            <person name="Schmutz J."/>
            <person name="Larimer F."/>
            <person name="Land M."/>
            <person name="Hauser L."/>
            <person name="Kyrpides N."/>
            <person name="Kim E."/>
            <person name="Ensigns S.A."/>
            <person name="Richardson P."/>
        </authorList>
    </citation>
    <scope>NUCLEOTIDE SEQUENCE [LARGE SCALE GENOMIC DNA]</scope>
    <source>
        <strain>ATCC BAA-1158 / Py2</strain>
    </source>
</reference>
<evidence type="ECO:0000255" key="1">
    <source>
        <dbReference type="HAMAP-Rule" id="MF_00071"/>
    </source>
</evidence>
<keyword id="KW-0997">Cell inner membrane</keyword>
<keyword id="KW-1003">Cell membrane</keyword>
<keyword id="KW-0342">GTP-binding</keyword>
<keyword id="KW-0378">Hydrolase</keyword>
<keyword id="KW-0472">Membrane</keyword>
<keyword id="KW-0547">Nucleotide-binding</keyword>
<keyword id="KW-0648">Protein biosynthesis</keyword>
<keyword id="KW-1185">Reference proteome</keyword>
<feature type="chain" id="PRO_1000092464" description="Elongation factor 4">
    <location>
        <begin position="1"/>
        <end position="601"/>
    </location>
</feature>
<feature type="domain" description="tr-type G">
    <location>
        <begin position="7"/>
        <end position="189"/>
    </location>
</feature>
<feature type="binding site" evidence="1">
    <location>
        <begin position="19"/>
        <end position="24"/>
    </location>
    <ligand>
        <name>GTP</name>
        <dbReference type="ChEBI" id="CHEBI:37565"/>
    </ligand>
</feature>
<feature type="binding site" evidence="1">
    <location>
        <begin position="136"/>
        <end position="139"/>
    </location>
    <ligand>
        <name>GTP</name>
        <dbReference type="ChEBI" id="CHEBI:37565"/>
    </ligand>
</feature>
<comment type="function">
    <text evidence="1">Required for accurate and efficient protein synthesis under certain stress conditions. May act as a fidelity factor of the translation reaction, by catalyzing a one-codon backward translocation of tRNAs on improperly translocated ribosomes. Back-translocation proceeds from a post-translocation (POST) complex to a pre-translocation (PRE) complex, thus giving elongation factor G a second chance to translocate the tRNAs correctly. Binds to ribosomes in a GTP-dependent manner.</text>
</comment>
<comment type="catalytic activity">
    <reaction evidence="1">
        <text>GTP + H2O = GDP + phosphate + H(+)</text>
        <dbReference type="Rhea" id="RHEA:19669"/>
        <dbReference type="ChEBI" id="CHEBI:15377"/>
        <dbReference type="ChEBI" id="CHEBI:15378"/>
        <dbReference type="ChEBI" id="CHEBI:37565"/>
        <dbReference type="ChEBI" id="CHEBI:43474"/>
        <dbReference type="ChEBI" id="CHEBI:58189"/>
        <dbReference type="EC" id="3.6.5.n1"/>
    </reaction>
</comment>
<comment type="subcellular location">
    <subcellularLocation>
        <location evidence="1">Cell inner membrane</location>
        <topology evidence="1">Peripheral membrane protein</topology>
        <orientation evidence="1">Cytoplasmic side</orientation>
    </subcellularLocation>
</comment>
<comment type="similarity">
    <text evidence="1">Belongs to the TRAFAC class translation factor GTPase superfamily. Classic translation factor GTPase family. LepA subfamily.</text>
</comment>